<evidence type="ECO:0000255" key="1">
    <source>
        <dbReference type="HAMAP-Rule" id="MF_01398"/>
    </source>
</evidence>
<protein>
    <recommendedName>
        <fullName evidence="1">ATP synthase subunit b 1</fullName>
    </recommendedName>
    <alternativeName>
        <fullName evidence="1">ATP synthase F(0) sector subunit b 1</fullName>
    </alternativeName>
    <alternativeName>
        <fullName evidence="1">ATPase subunit I 1</fullName>
    </alternativeName>
    <alternativeName>
        <fullName evidence="1">F-type ATPase subunit b 1</fullName>
        <shortName evidence="1">F-ATPase subunit b 1</shortName>
    </alternativeName>
</protein>
<sequence>MSIDWITVAAQIVNFLLLIWLLKRFLYRPILDGIDAREAEIAARMGEAAAVRQQAEARETEYEARIAQLSSSRAELLEEARRAAEAERDALLSKARARLEEEQAERAAHRAEEAARHRADLQRRGAEALLALTRKALRDLADEGLERRIVLQAAGRLADMGDDLREAAGDARQAVALTRDPLPEEVQARLRSDLGDVLEGVSLRFEVDPGQSPGLNLRLGGAQLGWTVDSYLNGLEATLAEAAGRPARRGGHDAA</sequence>
<organism>
    <name type="scientific">Dinoroseobacter shibae (strain DSM 16493 / NCIMB 14021 / DFL 12)</name>
    <dbReference type="NCBI Taxonomy" id="398580"/>
    <lineage>
        <taxon>Bacteria</taxon>
        <taxon>Pseudomonadati</taxon>
        <taxon>Pseudomonadota</taxon>
        <taxon>Alphaproteobacteria</taxon>
        <taxon>Rhodobacterales</taxon>
        <taxon>Roseobacteraceae</taxon>
        <taxon>Dinoroseobacter</taxon>
    </lineage>
</organism>
<proteinExistence type="inferred from homology"/>
<gene>
    <name evidence="1" type="primary">atpF1</name>
    <name type="ordered locus">Dshi_0441</name>
</gene>
<reference key="1">
    <citation type="journal article" date="2010" name="ISME J.">
        <title>The complete genome sequence of the algal symbiont Dinoroseobacter shibae: a hitchhiker's guide to life in the sea.</title>
        <authorList>
            <person name="Wagner-Dobler I."/>
            <person name="Ballhausen B."/>
            <person name="Berger M."/>
            <person name="Brinkhoff T."/>
            <person name="Buchholz I."/>
            <person name="Bunk B."/>
            <person name="Cypionka H."/>
            <person name="Daniel R."/>
            <person name="Drepper T."/>
            <person name="Gerdts G."/>
            <person name="Hahnke S."/>
            <person name="Han C."/>
            <person name="Jahn D."/>
            <person name="Kalhoefer D."/>
            <person name="Kiss H."/>
            <person name="Klenk H.P."/>
            <person name="Kyrpides N."/>
            <person name="Liebl W."/>
            <person name="Liesegang H."/>
            <person name="Meincke L."/>
            <person name="Pati A."/>
            <person name="Petersen J."/>
            <person name="Piekarski T."/>
            <person name="Pommerenke C."/>
            <person name="Pradella S."/>
            <person name="Pukall R."/>
            <person name="Rabus R."/>
            <person name="Stackebrandt E."/>
            <person name="Thole S."/>
            <person name="Thompson L."/>
            <person name="Tielen P."/>
            <person name="Tomasch J."/>
            <person name="von Jan M."/>
            <person name="Wanphrut N."/>
            <person name="Wichels A."/>
            <person name="Zech H."/>
            <person name="Simon M."/>
        </authorList>
    </citation>
    <scope>NUCLEOTIDE SEQUENCE [LARGE SCALE GENOMIC DNA]</scope>
    <source>
        <strain>DSM 16493 / NCIMB 14021 / DFL 12</strain>
    </source>
</reference>
<comment type="function">
    <text evidence="1">F(1)F(0) ATP synthase produces ATP from ADP in the presence of a proton or sodium gradient. F-type ATPases consist of two structural domains, F(1) containing the extramembraneous catalytic core and F(0) containing the membrane proton channel, linked together by a central stalk and a peripheral stalk. During catalysis, ATP synthesis in the catalytic domain of F(1) is coupled via a rotary mechanism of the central stalk subunits to proton translocation.</text>
</comment>
<comment type="function">
    <text evidence="1">Component of the F(0) channel, it forms part of the peripheral stalk, linking F(1) to F(0).</text>
</comment>
<comment type="subunit">
    <text evidence="1">F-type ATPases have 2 components, F(1) - the catalytic core - and F(0) - the membrane proton channel. F(1) has five subunits: alpha(3), beta(3), gamma(1), delta(1), epsilon(1). F(0) has three main subunits: a(1), b(2) and c(10-14). The alpha and beta chains form an alternating ring which encloses part of the gamma chain. F(1) is attached to F(0) by a central stalk formed by the gamma and epsilon chains, while a peripheral stalk is formed by the delta and b chains.</text>
</comment>
<comment type="subcellular location">
    <subcellularLocation>
        <location evidence="1">Cell inner membrane</location>
        <topology evidence="1">Single-pass membrane protein</topology>
    </subcellularLocation>
</comment>
<comment type="similarity">
    <text evidence="1">Belongs to the ATPase B chain family.</text>
</comment>
<name>ATPF1_DINSH</name>
<keyword id="KW-0066">ATP synthesis</keyword>
<keyword id="KW-0997">Cell inner membrane</keyword>
<keyword id="KW-1003">Cell membrane</keyword>
<keyword id="KW-0138">CF(0)</keyword>
<keyword id="KW-0375">Hydrogen ion transport</keyword>
<keyword id="KW-0406">Ion transport</keyword>
<keyword id="KW-0472">Membrane</keyword>
<keyword id="KW-1185">Reference proteome</keyword>
<keyword id="KW-0812">Transmembrane</keyword>
<keyword id="KW-1133">Transmembrane helix</keyword>
<keyword id="KW-0813">Transport</keyword>
<feature type="chain" id="PRO_0000368465" description="ATP synthase subunit b 1">
    <location>
        <begin position="1"/>
        <end position="255"/>
    </location>
</feature>
<feature type="transmembrane region" description="Helical" evidence="1">
    <location>
        <begin position="5"/>
        <end position="22"/>
    </location>
</feature>
<accession>A8LN45</accession>
<dbReference type="EMBL" id="CP000830">
    <property type="protein sequence ID" value="ABV92189.1"/>
    <property type="molecule type" value="Genomic_DNA"/>
</dbReference>
<dbReference type="RefSeq" id="WP_012177119.1">
    <property type="nucleotide sequence ID" value="NC_009952.1"/>
</dbReference>
<dbReference type="SMR" id="A8LN45"/>
<dbReference type="STRING" id="398580.Dshi_0441"/>
<dbReference type="KEGG" id="dsh:Dshi_0441"/>
<dbReference type="eggNOG" id="COG0711">
    <property type="taxonomic scope" value="Bacteria"/>
</dbReference>
<dbReference type="HOGENOM" id="CLU_070737_0_0_5"/>
<dbReference type="OrthoDB" id="466272at2"/>
<dbReference type="Proteomes" id="UP000006833">
    <property type="component" value="Chromosome"/>
</dbReference>
<dbReference type="GO" id="GO:0005886">
    <property type="term" value="C:plasma membrane"/>
    <property type="evidence" value="ECO:0007669"/>
    <property type="project" value="UniProtKB-SubCell"/>
</dbReference>
<dbReference type="GO" id="GO:0045259">
    <property type="term" value="C:proton-transporting ATP synthase complex"/>
    <property type="evidence" value="ECO:0007669"/>
    <property type="project" value="UniProtKB-KW"/>
</dbReference>
<dbReference type="GO" id="GO:0046933">
    <property type="term" value="F:proton-transporting ATP synthase activity, rotational mechanism"/>
    <property type="evidence" value="ECO:0007669"/>
    <property type="project" value="UniProtKB-UniRule"/>
</dbReference>
<dbReference type="GO" id="GO:0046961">
    <property type="term" value="F:proton-transporting ATPase activity, rotational mechanism"/>
    <property type="evidence" value="ECO:0007669"/>
    <property type="project" value="TreeGrafter"/>
</dbReference>
<dbReference type="CDD" id="cd06503">
    <property type="entry name" value="ATP-synt_Fo_b"/>
    <property type="match status" value="1"/>
</dbReference>
<dbReference type="HAMAP" id="MF_01398">
    <property type="entry name" value="ATP_synth_b_bprime"/>
    <property type="match status" value="1"/>
</dbReference>
<dbReference type="InterPro" id="IPR002146">
    <property type="entry name" value="ATP_synth_b/b'su_bac/chlpt"/>
</dbReference>
<dbReference type="InterPro" id="IPR050059">
    <property type="entry name" value="ATP_synthase_B_chain"/>
</dbReference>
<dbReference type="PANTHER" id="PTHR33445">
    <property type="entry name" value="ATP SYNTHASE SUBUNIT B', CHLOROPLASTIC"/>
    <property type="match status" value="1"/>
</dbReference>
<dbReference type="PANTHER" id="PTHR33445:SF2">
    <property type="entry name" value="ATP SYNTHASE SUBUNIT B', CHLOROPLASTIC"/>
    <property type="match status" value="1"/>
</dbReference>
<dbReference type="Pfam" id="PF00430">
    <property type="entry name" value="ATP-synt_B"/>
    <property type="match status" value="1"/>
</dbReference>